<sequence>MLSRNLKTLVKNKNILYFTTSTSKSNKIYENAKEAVKDIPNGSKLLVGGFGLCGIPENLISAVRDTGVKDLTVVSNNAGVDDFGLGVLLKSRQIKRMISSYVGENATFESQYLKGELEVELTPQGNLAERLRAGGAGIPAFYTSTGVGTVLVEEGGFPIKYANDGSGKVEIKSEPRPTQLYNGRKYCLEESITGDYALIKAWKADTRGNLVFRNTARNFNPPMATAAKITIAEVEEIVDAGEIKPDEVHVPGIYIQRIVKGPSFEKRIERLTVQKEKTGEAAAKPKDEAAAKRERIVRRAALEFEDGMYCNLGIGMPTLASNFIPKGIRIELQSENGLLGMGPFPKMGEHDADLINAGKETVTTIPGSSIFSSADSFAMIRGGHVDLTILGGMQVSGNGDLANWVIPGSMVKGPGGAMDLTSSGSRVVVIMEHTTKHGKPKILKNCTLPLTGKSCVNRIITELAVFDVVNGKLELIEVVDGQTVDDIKSKTEAEFTVSKNLKPLQQVEI</sequence>
<reference key="1">
    <citation type="journal article" date="2005" name="Nature">
        <title>The genome of the social amoeba Dictyostelium discoideum.</title>
        <authorList>
            <person name="Eichinger L."/>
            <person name="Pachebat J.A."/>
            <person name="Gloeckner G."/>
            <person name="Rajandream M.A."/>
            <person name="Sucgang R."/>
            <person name="Berriman M."/>
            <person name="Song J."/>
            <person name="Olsen R."/>
            <person name="Szafranski K."/>
            <person name="Xu Q."/>
            <person name="Tunggal B."/>
            <person name="Kummerfeld S."/>
            <person name="Madera M."/>
            <person name="Konfortov B.A."/>
            <person name="Rivero F."/>
            <person name="Bankier A.T."/>
            <person name="Lehmann R."/>
            <person name="Hamlin N."/>
            <person name="Davies R."/>
            <person name="Gaudet P."/>
            <person name="Fey P."/>
            <person name="Pilcher K."/>
            <person name="Chen G."/>
            <person name="Saunders D."/>
            <person name="Sodergren E.J."/>
            <person name="Davis P."/>
            <person name="Kerhornou A."/>
            <person name="Nie X."/>
            <person name="Hall N."/>
            <person name="Anjard C."/>
            <person name="Hemphill L."/>
            <person name="Bason N."/>
            <person name="Farbrother P."/>
            <person name="Desany B."/>
            <person name="Just E."/>
            <person name="Morio T."/>
            <person name="Rost R."/>
            <person name="Churcher C.M."/>
            <person name="Cooper J."/>
            <person name="Haydock S."/>
            <person name="van Driessche N."/>
            <person name="Cronin A."/>
            <person name="Goodhead I."/>
            <person name="Muzny D.M."/>
            <person name="Mourier T."/>
            <person name="Pain A."/>
            <person name="Lu M."/>
            <person name="Harper D."/>
            <person name="Lindsay R."/>
            <person name="Hauser H."/>
            <person name="James K.D."/>
            <person name="Quiles M."/>
            <person name="Madan Babu M."/>
            <person name="Saito T."/>
            <person name="Buchrieser C."/>
            <person name="Wardroper A."/>
            <person name="Felder M."/>
            <person name="Thangavelu M."/>
            <person name="Johnson D."/>
            <person name="Knights A."/>
            <person name="Loulseged H."/>
            <person name="Mungall K.L."/>
            <person name="Oliver K."/>
            <person name="Price C."/>
            <person name="Quail M.A."/>
            <person name="Urushihara H."/>
            <person name="Hernandez J."/>
            <person name="Rabbinowitsch E."/>
            <person name="Steffen D."/>
            <person name="Sanders M."/>
            <person name="Ma J."/>
            <person name="Kohara Y."/>
            <person name="Sharp S."/>
            <person name="Simmonds M.N."/>
            <person name="Spiegler S."/>
            <person name="Tivey A."/>
            <person name="Sugano S."/>
            <person name="White B."/>
            <person name="Walker D."/>
            <person name="Woodward J.R."/>
            <person name="Winckler T."/>
            <person name="Tanaka Y."/>
            <person name="Shaulsky G."/>
            <person name="Schleicher M."/>
            <person name="Weinstock G.M."/>
            <person name="Rosenthal A."/>
            <person name="Cox E.C."/>
            <person name="Chisholm R.L."/>
            <person name="Gibbs R.A."/>
            <person name="Loomis W.F."/>
            <person name="Platzer M."/>
            <person name="Kay R.R."/>
            <person name="Williams J.G."/>
            <person name="Dear P.H."/>
            <person name="Noegel A.A."/>
            <person name="Barrell B.G."/>
            <person name="Kuspa A."/>
        </authorList>
    </citation>
    <scope>NUCLEOTIDE SEQUENCE [LARGE SCALE GENOMIC DNA]</scope>
    <source>
        <strain>AX4</strain>
    </source>
</reference>
<comment type="function">
    <text>Key enzyme for ketone body catabolism. Transfers the CoA moiety from succinate to acetoacetate. Formation of the enzyme-CoA intermediate proceeds via an unstable anhydride species formed between the carboxylate groups of the enzyme and substrate.</text>
</comment>
<comment type="catalytic activity">
    <reaction evidence="3">
        <text>a 3-oxo acid + succinyl-CoA = a 3-oxoacyl-CoA + succinate</text>
        <dbReference type="Rhea" id="RHEA:24564"/>
        <dbReference type="ChEBI" id="CHEBI:30031"/>
        <dbReference type="ChEBI" id="CHEBI:35973"/>
        <dbReference type="ChEBI" id="CHEBI:57292"/>
        <dbReference type="ChEBI" id="CHEBI:90726"/>
        <dbReference type="EC" id="2.8.3.5"/>
    </reaction>
</comment>
<comment type="pathway">
    <text>Ketone metabolism; succinyl-CoA degradation; acetoacetyl-CoA from succinyl-CoA: step 1/1.</text>
</comment>
<comment type="subunit">
    <text evidence="1">Homodimer.</text>
</comment>
<comment type="subcellular location">
    <subcellularLocation>
        <location evidence="1">Mitochondrion</location>
    </subcellularLocation>
</comment>
<comment type="similarity">
    <text evidence="4">Belongs to the 3-oxoacid CoA-transferase family.</text>
</comment>
<proteinExistence type="inferred from homology"/>
<gene>
    <name type="primary">oxct1</name>
    <name type="ORF">DDB_G0288105</name>
</gene>
<dbReference type="EC" id="2.8.3.5"/>
<dbReference type="EMBL" id="AAFI02000109">
    <property type="protein sequence ID" value="EAL63397.1"/>
    <property type="molecule type" value="Genomic_DNA"/>
</dbReference>
<dbReference type="SMR" id="Q54JD9"/>
<dbReference type="FunCoup" id="Q54JD9">
    <property type="interactions" value="292"/>
</dbReference>
<dbReference type="STRING" id="44689.Q54JD9"/>
<dbReference type="PaxDb" id="44689-DDB0235256"/>
<dbReference type="EnsemblProtists" id="EAL63397">
    <property type="protein sequence ID" value="EAL63397"/>
    <property type="gene ID" value="DDB_G0288105"/>
</dbReference>
<dbReference type="KEGG" id="ddi:DDB_G0288105"/>
<dbReference type="dictyBase" id="DDB_G0288105">
    <property type="gene designation" value="oxct"/>
</dbReference>
<dbReference type="VEuPathDB" id="AmoebaDB:DDB_G0288105"/>
<dbReference type="eggNOG" id="KOG3822">
    <property type="taxonomic scope" value="Eukaryota"/>
</dbReference>
<dbReference type="HOGENOM" id="CLU_019942_1_2_1"/>
<dbReference type="InParanoid" id="Q54JD9"/>
<dbReference type="OMA" id="VKTMGQI"/>
<dbReference type="PhylomeDB" id="Q54JD9"/>
<dbReference type="Reactome" id="R-DDI-77108">
    <property type="pathway name" value="Utilization of Ketone Bodies"/>
</dbReference>
<dbReference type="Reactome" id="R-DDI-9837999">
    <property type="pathway name" value="Mitochondrial protein degradation"/>
</dbReference>
<dbReference type="UniPathway" id="UPA00929">
    <property type="reaction ID" value="UER00894"/>
</dbReference>
<dbReference type="PRO" id="PR:Q54JD9"/>
<dbReference type="Proteomes" id="UP000002195">
    <property type="component" value="Chromosome 5"/>
</dbReference>
<dbReference type="GO" id="GO:0005739">
    <property type="term" value="C:mitochondrion"/>
    <property type="evidence" value="ECO:0000250"/>
    <property type="project" value="dictyBase"/>
</dbReference>
<dbReference type="GO" id="GO:0045335">
    <property type="term" value="C:phagocytic vesicle"/>
    <property type="evidence" value="ECO:0007005"/>
    <property type="project" value="dictyBase"/>
</dbReference>
<dbReference type="GO" id="GO:0008260">
    <property type="term" value="F:succinyl-CoA:3-oxo-acid CoA-transferase activity"/>
    <property type="evidence" value="ECO:0000250"/>
    <property type="project" value="dictyBase"/>
</dbReference>
<dbReference type="GO" id="GO:0046952">
    <property type="term" value="P:ketone body catabolic process"/>
    <property type="evidence" value="ECO:0007669"/>
    <property type="project" value="InterPro"/>
</dbReference>
<dbReference type="GO" id="GO:1902224">
    <property type="term" value="P:ketone body metabolic process"/>
    <property type="evidence" value="ECO:0000250"/>
    <property type="project" value="dictyBase"/>
</dbReference>
<dbReference type="FunFam" id="3.40.1080.10:FF:000001">
    <property type="entry name" value="Succinyl-coa:3-ketoacid-coenzyme a transferase subunit b"/>
    <property type="match status" value="1"/>
</dbReference>
<dbReference type="FunFam" id="3.40.1080.10:FF:000002">
    <property type="entry name" value="Succinyl-CoA:3-ketoacid-coenzyme A transferase, mitochondrial"/>
    <property type="match status" value="1"/>
</dbReference>
<dbReference type="Gene3D" id="3.40.1080.10">
    <property type="entry name" value="Glutaconate Coenzyme A-transferase"/>
    <property type="match status" value="2"/>
</dbReference>
<dbReference type="InterPro" id="IPR012792">
    <property type="entry name" value="3-oxoacid_CoA-transf_A"/>
</dbReference>
<dbReference type="InterPro" id="IPR012791">
    <property type="entry name" value="3-oxoacid_CoA-transf_B"/>
</dbReference>
<dbReference type="InterPro" id="IPR014388">
    <property type="entry name" value="3-oxoacid_CoA-transferase"/>
</dbReference>
<dbReference type="InterPro" id="IPR004165">
    <property type="entry name" value="CoA_trans_fam_I"/>
</dbReference>
<dbReference type="InterPro" id="IPR004164">
    <property type="entry name" value="CoA_transf_AS"/>
</dbReference>
<dbReference type="InterPro" id="IPR004163">
    <property type="entry name" value="CoA_transf_BS"/>
</dbReference>
<dbReference type="InterPro" id="IPR037171">
    <property type="entry name" value="NagB/RpiA_transferase-like"/>
</dbReference>
<dbReference type="NCBIfam" id="TIGR02429">
    <property type="entry name" value="pcaI_scoA_fam"/>
    <property type="match status" value="1"/>
</dbReference>
<dbReference type="NCBIfam" id="TIGR02428">
    <property type="entry name" value="pcaJ_scoB_fam"/>
    <property type="match status" value="1"/>
</dbReference>
<dbReference type="PANTHER" id="PTHR13707">
    <property type="entry name" value="KETOACID-COENZYME A TRANSFERASE"/>
    <property type="match status" value="1"/>
</dbReference>
<dbReference type="PANTHER" id="PTHR13707:SF23">
    <property type="entry name" value="SUCCINYL-COA:3-KETOACID-COENZYME A TRANSFERASE"/>
    <property type="match status" value="1"/>
</dbReference>
<dbReference type="Pfam" id="PF01144">
    <property type="entry name" value="CoA_trans"/>
    <property type="match status" value="2"/>
</dbReference>
<dbReference type="PIRSF" id="PIRSF000858">
    <property type="entry name" value="SCOT-t"/>
    <property type="match status" value="1"/>
</dbReference>
<dbReference type="SMART" id="SM00882">
    <property type="entry name" value="CoA_trans"/>
    <property type="match status" value="2"/>
</dbReference>
<dbReference type="SUPFAM" id="SSF100950">
    <property type="entry name" value="NagB/RpiA/CoA transferase-like"/>
    <property type="match status" value="2"/>
</dbReference>
<dbReference type="PROSITE" id="PS01273">
    <property type="entry name" value="COA_TRANSF_1"/>
    <property type="match status" value="1"/>
</dbReference>
<dbReference type="PROSITE" id="PS01274">
    <property type="entry name" value="COA_TRANSF_2"/>
    <property type="match status" value="1"/>
</dbReference>
<keyword id="KW-0496">Mitochondrion</keyword>
<keyword id="KW-1185">Reference proteome</keyword>
<keyword id="KW-0808">Transferase</keyword>
<keyword id="KW-0809">Transit peptide</keyword>
<accession>Q54JD9</accession>
<organism>
    <name type="scientific">Dictyostelium discoideum</name>
    <name type="common">Social amoeba</name>
    <dbReference type="NCBI Taxonomy" id="44689"/>
    <lineage>
        <taxon>Eukaryota</taxon>
        <taxon>Amoebozoa</taxon>
        <taxon>Evosea</taxon>
        <taxon>Eumycetozoa</taxon>
        <taxon>Dictyostelia</taxon>
        <taxon>Dictyosteliales</taxon>
        <taxon>Dictyosteliaceae</taxon>
        <taxon>Dictyostelium</taxon>
    </lineage>
</organism>
<evidence type="ECO:0000250" key="1"/>
<evidence type="ECO:0000255" key="2"/>
<evidence type="ECO:0000255" key="3">
    <source>
        <dbReference type="PROSITE-ProRule" id="PRU10034"/>
    </source>
</evidence>
<evidence type="ECO:0000305" key="4"/>
<name>SCOT_DICDI</name>
<protein>
    <recommendedName>
        <fullName>Probable succinyl-CoA:3-ketoacid coenzyme A transferase, mitochondrial</fullName>
        <ecNumber>2.8.3.5</ecNumber>
    </recommendedName>
    <alternativeName>
        <fullName>3-oxoacid CoA-transferase</fullName>
    </alternativeName>
</protein>
<feature type="transit peptide" description="Mitochondrion" evidence="2">
    <location>
        <begin position="1"/>
        <end status="unknown"/>
    </location>
</feature>
<feature type="chain" id="PRO_0000327840" description="Probable succinyl-CoA:3-ketoacid coenzyme A transferase, mitochondrial">
    <location>
        <begin status="unknown"/>
        <end position="509"/>
    </location>
</feature>
<feature type="active site" description="5-glutamyl coenzyme A thioester intermediate" evidence="3">
    <location>
        <position position="335"/>
    </location>
</feature>